<reference key="1">
    <citation type="journal article" date="2008" name="DNA Res.">
        <title>Comparative genome analysis of Lactobacillus reuteri and Lactobacillus fermentum reveal a genomic island for reuterin and cobalamin production.</title>
        <authorList>
            <person name="Morita H."/>
            <person name="Toh H."/>
            <person name="Fukuda S."/>
            <person name="Horikawa H."/>
            <person name="Oshima K."/>
            <person name="Suzuki T."/>
            <person name="Murakami M."/>
            <person name="Hisamatsu S."/>
            <person name="Kato Y."/>
            <person name="Takizawa T."/>
            <person name="Fukuoka H."/>
            <person name="Yoshimura T."/>
            <person name="Itoh K."/>
            <person name="O'Sullivan D.J."/>
            <person name="McKay L.L."/>
            <person name="Ohno H."/>
            <person name="Kikuchi J."/>
            <person name="Masaoka T."/>
            <person name="Hattori M."/>
        </authorList>
    </citation>
    <scope>NUCLEOTIDE SEQUENCE [LARGE SCALE GENOMIC DNA]</scope>
    <source>
        <strain>NBRC 3956 / LMG 18251</strain>
    </source>
</reference>
<protein>
    <recommendedName>
        <fullName evidence="1">Large ribosomal subunit protein bL12</fullName>
    </recommendedName>
    <alternativeName>
        <fullName evidence="2">50S ribosomal protein L7/L12</fullName>
    </alternativeName>
</protein>
<accession>B2GAC6</accession>
<gene>
    <name evidence="1" type="primary">rplL</name>
    <name type="ordered locus">LAF_0272</name>
</gene>
<proteinExistence type="inferred from homology"/>
<dbReference type="EMBL" id="AP008937">
    <property type="protein sequence ID" value="BAG26608.1"/>
    <property type="molecule type" value="Genomic_DNA"/>
</dbReference>
<dbReference type="RefSeq" id="WP_004562749.1">
    <property type="nucleotide sequence ID" value="NC_010610.1"/>
</dbReference>
<dbReference type="SMR" id="B2GAC6"/>
<dbReference type="GeneID" id="83715407"/>
<dbReference type="KEGG" id="lfe:LAF_0272"/>
<dbReference type="eggNOG" id="COG0222">
    <property type="taxonomic scope" value="Bacteria"/>
</dbReference>
<dbReference type="HOGENOM" id="CLU_086499_3_2_9"/>
<dbReference type="Proteomes" id="UP000001697">
    <property type="component" value="Chromosome"/>
</dbReference>
<dbReference type="GO" id="GO:0022625">
    <property type="term" value="C:cytosolic large ribosomal subunit"/>
    <property type="evidence" value="ECO:0007669"/>
    <property type="project" value="TreeGrafter"/>
</dbReference>
<dbReference type="GO" id="GO:0003729">
    <property type="term" value="F:mRNA binding"/>
    <property type="evidence" value="ECO:0007669"/>
    <property type="project" value="TreeGrafter"/>
</dbReference>
<dbReference type="GO" id="GO:0003735">
    <property type="term" value="F:structural constituent of ribosome"/>
    <property type="evidence" value="ECO:0007669"/>
    <property type="project" value="InterPro"/>
</dbReference>
<dbReference type="GO" id="GO:0006412">
    <property type="term" value="P:translation"/>
    <property type="evidence" value="ECO:0007669"/>
    <property type="project" value="UniProtKB-UniRule"/>
</dbReference>
<dbReference type="CDD" id="cd00387">
    <property type="entry name" value="Ribosomal_L7_L12"/>
    <property type="match status" value="1"/>
</dbReference>
<dbReference type="FunFam" id="3.30.1390.10:FF:000001">
    <property type="entry name" value="50S ribosomal protein L7/L12"/>
    <property type="match status" value="1"/>
</dbReference>
<dbReference type="Gene3D" id="3.30.1390.10">
    <property type="match status" value="1"/>
</dbReference>
<dbReference type="Gene3D" id="1.20.5.710">
    <property type="entry name" value="Single helix bin"/>
    <property type="match status" value="1"/>
</dbReference>
<dbReference type="HAMAP" id="MF_00368">
    <property type="entry name" value="Ribosomal_bL12"/>
    <property type="match status" value="1"/>
</dbReference>
<dbReference type="InterPro" id="IPR000206">
    <property type="entry name" value="Ribosomal_bL12"/>
</dbReference>
<dbReference type="InterPro" id="IPR013823">
    <property type="entry name" value="Ribosomal_bL12_C"/>
</dbReference>
<dbReference type="InterPro" id="IPR014719">
    <property type="entry name" value="Ribosomal_bL12_C/ClpS-like"/>
</dbReference>
<dbReference type="InterPro" id="IPR008932">
    <property type="entry name" value="Ribosomal_bL12_oligo"/>
</dbReference>
<dbReference type="InterPro" id="IPR036235">
    <property type="entry name" value="Ribosomal_bL12_oligo_N_sf"/>
</dbReference>
<dbReference type="NCBIfam" id="TIGR00855">
    <property type="entry name" value="L12"/>
    <property type="match status" value="1"/>
</dbReference>
<dbReference type="PANTHER" id="PTHR45987">
    <property type="entry name" value="39S RIBOSOMAL PROTEIN L12"/>
    <property type="match status" value="1"/>
</dbReference>
<dbReference type="PANTHER" id="PTHR45987:SF4">
    <property type="entry name" value="LARGE RIBOSOMAL SUBUNIT PROTEIN BL12M"/>
    <property type="match status" value="1"/>
</dbReference>
<dbReference type="Pfam" id="PF00542">
    <property type="entry name" value="Ribosomal_L12"/>
    <property type="match status" value="1"/>
</dbReference>
<dbReference type="Pfam" id="PF16320">
    <property type="entry name" value="Ribosomal_L12_N"/>
    <property type="match status" value="1"/>
</dbReference>
<dbReference type="SUPFAM" id="SSF54736">
    <property type="entry name" value="ClpS-like"/>
    <property type="match status" value="1"/>
</dbReference>
<dbReference type="SUPFAM" id="SSF48300">
    <property type="entry name" value="Ribosomal protein L7/12, oligomerisation (N-terminal) domain"/>
    <property type="match status" value="1"/>
</dbReference>
<organism>
    <name type="scientific">Limosilactobacillus fermentum (strain NBRC 3956 / LMG 18251)</name>
    <name type="common">Lactobacillus fermentum</name>
    <dbReference type="NCBI Taxonomy" id="334390"/>
    <lineage>
        <taxon>Bacteria</taxon>
        <taxon>Bacillati</taxon>
        <taxon>Bacillota</taxon>
        <taxon>Bacilli</taxon>
        <taxon>Lactobacillales</taxon>
        <taxon>Lactobacillaceae</taxon>
        <taxon>Limosilactobacillus</taxon>
    </lineage>
</organism>
<sequence length="121" mass="12329">MAFDKDAIIASLKEASISDLNDLVKAIEEEFDVSAAAPVAVAGAAGGEAAAKDSFTVELTSAGSAKVKVIKVVKDITGLGLKDAKALVDGAPSNVKEDVKEDEANDIKAKLEEVGASVTLK</sequence>
<name>RL7_LIMF3</name>
<feature type="chain" id="PRO_1000121453" description="Large ribosomal subunit protein bL12">
    <location>
        <begin position="1"/>
        <end position="121"/>
    </location>
</feature>
<keyword id="KW-1185">Reference proteome</keyword>
<keyword id="KW-0687">Ribonucleoprotein</keyword>
<keyword id="KW-0689">Ribosomal protein</keyword>
<comment type="function">
    <text evidence="1">Forms part of the ribosomal stalk which helps the ribosome interact with GTP-bound translation factors. Is thus essential for accurate translation.</text>
</comment>
<comment type="subunit">
    <text evidence="1">Homodimer. Part of the ribosomal stalk of the 50S ribosomal subunit. Forms a multimeric L10(L12)X complex, where L10 forms an elongated spine to which 2 to 4 L12 dimers bind in a sequential fashion. Binds GTP-bound translation factors.</text>
</comment>
<comment type="similarity">
    <text evidence="1">Belongs to the bacterial ribosomal protein bL12 family.</text>
</comment>
<evidence type="ECO:0000255" key="1">
    <source>
        <dbReference type="HAMAP-Rule" id="MF_00368"/>
    </source>
</evidence>
<evidence type="ECO:0000305" key="2"/>